<gene>
    <name type="primary">Srr</name>
</gene>
<feature type="chain" id="PRO_0000185651" description="Serine racemase">
    <location>
        <begin position="1"/>
        <end position="339"/>
    </location>
</feature>
<feature type="active site" description="Proton acceptor" evidence="1">
    <location>
        <position position="56"/>
    </location>
</feature>
<feature type="active site" description="Proton acceptor" evidence="1">
    <location>
        <position position="84"/>
    </location>
</feature>
<feature type="binding site" evidence="3">
    <location>
        <position position="13"/>
    </location>
    <ligand>
        <name>Mg(2+)</name>
        <dbReference type="ChEBI" id="CHEBI:18420"/>
        <label>1</label>
    </ligand>
</feature>
<feature type="binding site" evidence="3">
    <location>
        <position position="31"/>
    </location>
    <ligand>
        <name>ATP</name>
        <dbReference type="ChEBI" id="CHEBI:30616"/>
    </ligand>
</feature>
<feature type="binding site" evidence="3">
    <location>
        <position position="32"/>
    </location>
    <ligand>
        <name>ATP</name>
        <dbReference type="ChEBI" id="CHEBI:30616"/>
    </ligand>
</feature>
<feature type="binding site" evidence="3">
    <location>
        <position position="33"/>
    </location>
    <ligand>
        <name>ATP</name>
        <dbReference type="ChEBI" id="CHEBI:30616"/>
    </ligand>
</feature>
<feature type="binding site" evidence="3">
    <location>
        <position position="51"/>
    </location>
    <ligand>
        <name>ATP</name>
        <dbReference type="ChEBI" id="CHEBI:30616"/>
    </ligand>
</feature>
<feature type="binding site" evidence="3">
    <location>
        <position position="52"/>
    </location>
    <ligand>
        <name>ATP</name>
        <dbReference type="ChEBI" id="CHEBI:30616"/>
    </ligand>
</feature>
<feature type="binding site" evidence="3">
    <location>
        <position position="69"/>
    </location>
    <ligand>
        <name>Ca(2+)</name>
        <dbReference type="ChEBI" id="CHEBI:29108"/>
        <label>1</label>
    </ligand>
</feature>
<feature type="binding site" evidence="3">
    <location>
        <position position="81"/>
    </location>
    <ligand>
        <name>Ca(2+)</name>
        <dbReference type="ChEBI" id="CHEBI:29108"/>
        <label>2</label>
    </ligand>
</feature>
<feature type="binding site" evidence="3">
    <location>
        <position position="86"/>
    </location>
    <ligand>
        <name>pyridoxal 5'-phosphate</name>
        <dbReference type="ChEBI" id="CHEBI:597326"/>
    </ligand>
</feature>
<feature type="binding site" evidence="3">
    <location>
        <position position="89"/>
    </location>
    <ligand>
        <name>ATP</name>
        <dbReference type="ChEBI" id="CHEBI:30616"/>
    </ligand>
</feature>
<feature type="binding site" evidence="3">
    <location>
        <position position="121"/>
    </location>
    <ligand>
        <name>ATP</name>
        <dbReference type="ChEBI" id="CHEBI:30616"/>
    </ligand>
</feature>
<feature type="binding site" evidence="2">
    <location>
        <position position="154"/>
    </location>
    <ligand>
        <name>pyridoxal 5'-phosphate</name>
        <dbReference type="ChEBI" id="CHEBI:597326"/>
    </ligand>
</feature>
<feature type="binding site" evidence="3">
    <location>
        <position position="178"/>
    </location>
    <ligand>
        <name>Mg(2+)</name>
        <dbReference type="ChEBI" id="CHEBI:18420"/>
        <label>2</label>
    </ligand>
</feature>
<feature type="binding site" evidence="3">
    <location>
        <position position="185"/>
    </location>
    <ligand>
        <name>pyridoxal 5'-phosphate</name>
        <dbReference type="ChEBI" id="CHEBI:597326"/>
    </ligand>
</feature>
<feature type="binding site" evidence="3">
    <location>
        <position position="186"/>
    </location>
    <ligand>
        <name>pyridoxal 5'-phosphate</name>
        <dbReference type="ChEBI" id="CHEBI:597326"/>
    </ligand>
</feature>
<feature type="binding site" evidence="3">
    <location>
        <position position="187"/>
    </location>
    <ligand>
        <name>pyridoxal 5'-phosphate</name>
        <dbReference type="ChEBI" id="CHEBI:597326"/>
    </ligand>
</feature>
<feature type="binding site" evidence="3">
    <location>
        <position position="188"/>
    </location>
    <ligand>
        <name>pyridoxal 5'-phosphate</name>
        <dbReference type="ChEBI" id="CHEBI:597326"/>
    </ligand>
</feature>
<feature type="binding site" evidence="3">
    <location>
        <position position="189"/>
    </location>
    <ligand>
        <name>pyridoxal 5'-phosphate</name>
        <dbReference type="ChEBI" id="CHEBI:597326"/>
    </ligand>
</feature>
<feature type="binding site" evidence="3">
    <location>
        <position position="210"/>
    </location>
    <ligand>
        <name>Ca(2+)</name>
        <dbReference type="ChEBI" id="CHEBI:29108"/>
        <label>3</label>
    </ligand>
</feature>
<feature type="binding site" evidence="3">
    <location>
        <position position="210"/>
    </location>
    <ligand>
        <name>Mg(2+)</name>
        <dbReference type="ChEBI" id="CHEBI:18420"/>
        <label>3</label>
    </ligand>
</feature>
<feature type="binding site" evidence="3">
    <location>
        <position position="210"/>
    </location>
    <ligand>
        <name>Mn(2+)</name>
        <dbReference type="ChEBI" id="CHEBI:29035"/>
    </ligand>
</feature>
<feature type="binding site" evidence="3">
    <location>
        <position position="214"/>
    </location>
    <ligand>
        <name>Ca(2+)</name>
        <dbReference type="ChEBI" id="CHEBI:29108"/>
        <label>3</label>
    </ligand>
</feature>
<feature type="binding site" evidence="3">
    <location>
        <position position="214"/>
    </location>
    <ligand>
        <name>Mg(2+)</name>
        <dbReference type="ChEBI" id="CHEBI:18420"/>
        <label>3</label>
    </ligand>
</feature>
<feature type="binding site" evidence="3">
    <location>
        <position position="214"/>
    </location>
    <ligand>
        <name>Mn(2+)</name>
        <dbReference type="ChEBI" id="CHEBI:29035"/>
    </ligand>
</feature>
<feature type="binding site" evidence="3">
    <location>
        <position position="216"/>
    </location>
    <ligand>
        <name>Ca(2+)</name>
        <dbReference type="ChEBI" id="CHEBI:29108"/>
        <label>3</label>
    </ligand>
</feature>
<feature type="binding site" evidence="3">
    <location>
        <position position="216"/>
    </location>
    <ligand>
        <name>Mg(2+)</name>
        <dbReference type="ChEBI" id="CHEBI:18420"/>
        <label>3</label>
    </ligand>
</feature>
<feature type="binding site" evidence="3">
    <location>
        <position position="216"/>
    </location>
    <ligand>
        <name>Mn(2+)</name>
        <dbReference type="ChEBI" id="CHEBI:29035"/>
    </ligand>
</feature>
<feature type="binding site" evidence="3">
    <location>
        <position position="247"/>
    </location>
    <ligand>
        <name>Ca(2+)</name>
        <dbReference type="ChEBI" id="CHEBI:29108"/>
        <label>4</label>
    </ligand>
</feature>
<feature type="binding site" evidence="3">
    <location>
        <position position="247"/>
    </location>
    <ligand>
        <name>Mg(2+)</name>
        <dbReference type="ChEBI" id="CHEBI:18420"/>
        <label>4</label>
    </ligand>
</feature>
<feature type="binding site" evidence="3">
    <location>
        <position position="279"/>
    </location>
    <ligand>
        <name>ATP</name>
        <dbReference type="ChEBI" id="CHEBI:30616"/>
    </ligand>
</feature>
<feature type="binding site" evidence="3">
    <location>
        <position position="313"/>
    </location>
    <ligand>
        <name>pyridoxal 5'-phosphate</name>
        <dbReference type="ChEBI" id="CHEBI:597326"/>
    </ligand>
</feature>
<feature type="binding site" evidence="3">
    <location>
        <position position="316"/>
    </location>
    <ligand>
        <name>ATP</name>
        <dbReference type="ChEBI" id="CHEBI:30616"/>
    </ligand>
</feature>
<feature type="modified residue" description="N6-(pyridoxal phosphate)lysine" evidence="3">
    <location>
        <position position="56"/>
    </location>
</feature>
<feature type="modified residue" description="Phosphothreonine" evidence="14">
    <location>
        <position position="71"/>
    </location>
</feature>
<feature type="modified residue" description="S-nitrosocysteine" evidence="8">
    <location>
        <position position="113"/>
    </location>
</feature>
<feature type="splice variant" id="VSP_025013" description="In isoform 2." evidence="12">
    <location>
        <begin position="174"/>
        <end position="198"/>
    </location>
</feature>
<feature type="splice variant" id="VSP_025014" description="In isoform 3." evidence="13">
    <location>
        <begin position="183"/>
        <end position="339"/>
    </location>
</feature>
<feature type="mutagenesis site" description="Impairs ATP-binding inducing a 80% decrease in enzyme activity.">
    <original>K</original>
    <variation>A</variation>
    <location>
        <position position="51"/>
    </location>
</feature>
<feature type="mutagenesis site" description="Abolishes S-nitrosylation." evidence="8">
    <original>C</original>
    <variation>S</variation>
    <location>
        <position position="113"/>
    </location>
</feature>
<feature type="sequence conflict" description="In Ref. 2; BAC25712." evidence="13" ref="2">
    <original>P</original>
    <variation>T</variation>
    <location>
        <position position="111"/>
    </location>
</feature>
<comment type="function">
    <text evidence="4 5 6 7 8">Catalyzes the synthesis of D-serine from L-serine. D-serine is a key coagonist with glutamate at NMDA receptors. Has dehydratase activity towards both L-serine and D-serine.</text>
</comment>
<comment type="catalytic activity">
    <reaction evidence="4 5 6 7">
        <text>L-serine = D-serine</text>
        <dbReference type="Rhea" id="RHEA:10980"/>
        <dbReference type="ChEBI" id="CHEBI:33384"/>
        <dbReference type="ChEBI" id="CHEBI:35247"/>
        <dbReference type="EC" id="5.1.1.18"/>
    </reaction>
</comment>
<comment type="catalytic activity">
    <reaction evidence="7">
        <text>D-serine = pyruvate + NH4(+)</text>
        <dbReference type="Rhea" id="RHEA:13977"/>
        <dbReference type="ChEBI" id="CHEBI:15361"/>
        <dbReference type="ChEBI" id="CHEBI:28938"/>
        <dbReference type="ChEBI" id="CHEBI:35247"/>
        <dbReference type="EC" id="4.3.1.18"/>
    </reaction>
</comment>
<comment type="catalytic activity">
    <reaction evidence="5 6 7">
        <text>L-serine = pyruvate + NH4(+)</text>
        <dbReference type="Rhea" id="RHEA:19169"/>
        <dbReference type="ChEBI" id="CHEBI:15361"/>
        <dbReference type="ChEBI" id="CHEBI:28938"/>
        <dbReference type="ChEBI" id="CHEBI:33384"/>
        <dbReference type="EC" id="4.3.1.17"/>
    </reaction>
</comment>
<comment type="cofactor">
    <cofactor evidence="3">
        <name>Mg(2+)</name>
        <dbReference type="ChEBI" id="CHEBI:18420"/>
    </cofactor>
    <cofactor evidence="3">
        <name>Mn(2+)</name>
        <dbReference type="ChEBI" id="CHEBI:29035"/>
    </cofactor>
    <cofactor evidence="3">
        <name>Ca(2+)</name>
        <dbReference type="ChEBI" id="CHEBI:29108"/>
    </cofactor>
</comment>
<comment type="cofactor">
    <cofactor evidence="4 6">
        <name>pyridoxal 5'-phosphate</name>
        <dbReference type="ChEBI" id="CHEBI:597326"/>
    </cofactor>
</comment>
<comment type="activity regulation">
    <text evidence="5 6">Allosterically activated by magnesium, and possibly also other divalent metal cations. Allosterically activated by ATP, ADP or GTP.</text>
</comment>
<comment type="subunit">
    <text evidence="6">Homodimer.</text>
</comment>
<comment type="alternative products">
    <event type="alternative splicing"/>
    <isoform>
        <id>Q9QZX7-1</id>
        <name>1</name>
        <sequence type="displayed"/>
    </isoform>
    <isoform>
        <id>Q9QZX7-2</id>
        <name>2</name>
        <sequence type="described" ref="VSP_025013"/>
    </isoform>
    <isoform>
        <id>Q9QZX7-3</id>
        <name>3</name>
        <sequence type="described" ref="VSP_025014"/>
    </isoform>
</comment>
<comment type="tissue specificity">
    <text evidence="9 10">Expressed in the hippocampus (at protein level) (Ref.6). Expressed in the small intestine (PubMed:35915065).</text>
</comment>
<comment type="PTM">
    <text evidence="8">S-nitrosylated, leading to decrease the enzyme activity.</text>
</comment>
<comment type="similarity">
    <text evidence="13">Belongs to the serine/threonine dehydratase family.</text>
</comment>
<comment type="sequence caution" evidence="13">
    <conflict type="erroneous gene model prediction">
        <sequence resource="EMBL-CDS" id="CAI24255"/>
    </conflict>
</comment>
<protein>
    <recommendedName>
        <fullName evidence="11">Serine racemase</fullName>
        <ecNumber evidence="4 5 6 7">5.1.1.18</ecNumber>
    </recommendedName>
    <alternativeName>
        <fullName>D-serine ammonia-lyase</fullName>
    </alternativeName>
    <alternativeName>
        <fullName>D-serine dehydratase</fullName>
        <ecNumber evidence="7">4.3.1.18</ecNumber>
    </alternativeName>
    <alternativeName>
        <fullName>L-serine ammonia-lyase</fullName>
    </alternativeName>
    <alternativeName>
        <fullName>L-serine dehydratase</fullName>
        <ecNumber evidence="5 6 7">4.3.1.17</ecNumber>
    </alternativeName>
</protein>
<organism>
    <name type="scientific">Mus musculus</name>
    <name type="common">Mouse</name>
    <dbReference type="NCBI Taxonomy" id="10090"/>
    <lineage>
        <taxon>Eukaryota</taxon>
        <taxon>Metazoa</taxon>
        <taxon>Chordata</taxon>
        <taxon>Craniata</taxon>
        <taxon>Vertebrata</taxon>
        <taxon>Euteleostomi</taxon>
        <taxon>Mammalia</taxon>
        <taxon>Eutheria</taxon>
        <taxon>Euarchontoglires</taxon>
        <taxon>Glires</taxon>
        <taxon>Rodentia</taxon>
        <taxon>Myomorpha</taxon>
        <taxon>Muroidea</taxon>
        <taxon>Muridae</taxon>
        <taxon>Murinae</taxon>
        <taxon>Mus</taxon>
        <taxon>Mus</taxon>
    </lineage>
</organism>
<name>SRR_MOUSE</name>
<sequence length="339" mass="36359">MCAQYCISFADVEKAHINIQDSIHLTPVLTSSILNQIAGRNLFFKCELFQKTGSFKIRGALNAIRGLIPDTPEEKPKAVVTHSSGNHGQALTYAAKLEGIPAYIVVPQTAPNCKKLAIQAYGASIVYCDPSDESREKVTQRIMQETEGILVHPNQEPAVIAGQGTIALEVLNQVPLVDALVVPVGGGGMVAGIAITIKALKPSVKVYAAEPSNADDCYQSKLKGELTPNLHPPETIADGVKSSIGLNTWPIIRDLVDDVFTVTEDEIKYATQLVWGRMKLLIEPTAGVALAAVLSQHFQTVSPEVKNVCIVLSGGNVDLTSLNWVGQAERPAPYQTVSV</sequence>
<accession>Q9QZX7</accession>
<accession>Q401M7</accession>
<accession>Q5SWE4</accession>
<accession>Q5SWE5</accession>
<accession>Q5SWE7</accession>
<accession>Q8BT19</accession>
<accession>Q8CD11</accession>
<dbReference type="EC" id="5.1.1.18" evidence="4 5 6 7"/>
<dbReference type="EC" id="4.3.1.18" evidence="7"/>
<dbReference type="EC" id="4.3.1.17" evidence="5 6 7"/>
<dbReference type="EMBL" id="AF148321">
    <property type="protein sequence ID" value="AAF08701.1"/>
    <property type="molecule type" value="mRNA"/>
</dbReference>
<dbReference type="EMBL" id="AK031687">
    <property type="protein sequence ID" value="BAC27514.1"/>
    <property type="molecule type" value="mRNA"/>
</dbReference>
<dbReference type="EMBL" id="AK028034">
    <property type="protein sequence ID" value="BAC25712.1"/>
    <property type="molecule type" value="mRNA"/>
</dbReference>
<dbReference type="EMBL" id="AK043738">
    <property type="protein sequence ID" value="BAC31637.1"/>
    <property type="molecule type" value="mRNA"/>
</dbReference>
<dbReference type="EMBL" id="AK157122">
    <property type="protein sequence ID" value="BAE33968.1"/>
    <property type="molecule type" value="mRNA"/>
</dbReference>
<dbReference type="EMBL" id="AK170096">
    <property type="protein sequence ID" value="BAE41561.1"/>
    <property type="molecule type" value="mRNA"/>
</dbReference>
<dbReference type="EMBL" id="AL604066">
    <property type="protein sequence ID" value="CAI24252.1"/>
    <property type="molecule type" value="Genomic_DNA"/>
</dbReference>
<dbReference type="EMBL" id="AL604066">
    <property type="protein sequence ID" value="CAI24253.1"/>
    <property type="molecule type" value="Genomic_DNA"/>
</dbReference>
<dbReference type="EMBL" id="AL604066">
    <property type="protein sequence ID" value="CAI24254.1"/>
    <property type="molecule type" value="Genomic_DNA"/>
</dbReference>
<dbReference type="EMBL" id="AL604066">
    <property type="protein sequence ID" value="CAI24255.1"/>
    <property type="status" value="ALT_SEQ"/>
    <property type="molecule type" value="Genomic_DNA"/>
</dbReference>
<dbReference type="EMBL" id="BC011164">
    <property type="protein sequence ID" value="AAH11164.1"/>
    <property type="molecule type" value="mRNA"/>
</dbReference>
<dbReference type="EMBL" id="AB232340">
    <property type="protein sequence ID" value="BAE19920.1"/>
    <property type="molecule type" value="mRNA"/>
</dbReference>
<dbReference type="EMBL" id="AB232341">
    <property type="protein sequence ID" value="BAE19921.1"/>
    <property type="molecule type" value="mRNA"/>
</dbReference>
<dbReference type="EMBL" id="AB232342">
    <property type="protein sequence ID" value="BAE19922.1"/>
    <property type="molecule type" value="mRNA"/>
</dbReference>
<dbReference type="EMBL" id="AB232343">
    <property type="protein sequence ID" value="BAE19923.1"/>
    <property type="molecule type" value="mRNA"/>
</dbReference>
<dbReference type="EMBL" id="AB235396">
    <property type="protein sequence ID" value="BAE44529.1"/>
    <property type="molecule type" value="mRNA"/>
</dbReference>
<dbReference type="CCDS" id="CCDS25038.1">
    <molecule id="Q9QZX7-1"/>
</dbReference>
<dbReference type="CCDS" id="CCDS88190.1">
    <molecule id="Q9QZX7-2"/>
</dbReference>
<dbReference type="RefSeq" id="NP_001156783.1">
    <molecule id="Q9QZX7-1"/>
    <property type="nucleotide sequence ID" value="NM_001163311.2"/>
</dbReference>
<dbReference type="RefSeq" id="NP_001349671.1">
    <molecule id="Q9QZX7-2"/>
    <property type="nucleotide sequence ID" value="NM_001362742.1"/>
</dbReference>
<dbReference type="RefSeq" id="NP_038789.1">
    <molecule id="Q9QZX7-1"/>
    <property type="nucleotide sequence ID" value="NM_013761.5"/>
</dbReference>
<dbReference type="RefSeq" id="XP_006533520.1">
    <molecule id="Q9QZX7-1"/>
    <property type="nucleotide sequence ID" value="XM_006533457.5"/>
</dbReference>
<dbReference type="RefSeq" id="XP_017170058.1">
    <property type="nucleotide sequence ID" value="XM_017314569.1"/>
</dbReference>
<dbReference type="RefSeq" id="XP_017170059.1">
    <property type="nucleotide sequence ID" value="XM_017314570.1"/>
</dbReference>
<dbReference type="RefSeq" id="XP_017170060.1">
    <molecule id="Q9QZX7-1"/>
    <property type="nucleotide sequence ID" value="XM_017314571.3"/>
</dbReference>
<dbReference type="SMR" id="Q9QZX7"/>
<dbReference type="BioGRID" id="205172">
    <property type="interactions" value="9"/>
</dbReference>
<dbReference type="FunCoup" id="Q9QZX7">
    <property type="interactions" value="228"/>
</dbReference>
<dbReference type="STRING" id="10090.ENSMUSP00000067552"/>
<dbReference type="BindingDB" id="Q9QZX7"/>
<dbReference type="ChEMBL" id="CHEMBL1075306"/>
<dbReference type="GlyGen" id="Q9QZX7">
    <property type="glycosylation" value="2 sites, 1 O-linked glycan (1 site)"/>
</dbReference>
<dbReference type="iPTMnet" id="Q9QZX7"/>
<dbReference type="PhosphoSitePlus" id="Q9QZX7"/>
<dbReference type="SwissPalm" id="Q9QZX7"/>
<dbReference type="jPOST" id="Q9QZX7"/>
<dbReference type="PaxDb" id="10090-ENSMUSP00000113372"/>
<dbReference type="PeptideAtlas" id="Q9QZX7"/>
<dbReference type="ProteomicsDB" id="257407">
    <molecule id="Q9QZX7-1"/>
</dbReference>
<dbReference type="ProteomicsDB" id="257408">
    <molecule id="Q9QZX7-2"/>
</dbReference>
<dbReference type="ProteomicsDB" id="257409">
    <molecule id="Q9QZX7-3"/>
</dbReference>
<dbReference type="Pumba" id="Q9QZX7"/>
<dbReference type="Antibodypedia" id="4201">
    <property type="antibodies" value="338 antibodies from 28 providers"/>
</dbReference>
<dbReference type="DNASU" id="27364"/>
<dbReference type="Ensembl" id="ENSMUST00000065211.9">
    <molecule id="Q9QZX7-1"/>
    <property type="protein sequence ID" value="ENSMUSP00000067552.3"/>
    <property type="gene ID" value="ENSMUSG00000001323.18"/>
</dbReference>
<dbReference type="Ensembl" id="ENSMUST00000108447.8">
    <molecule id="Q9QZX7-2"/>
    <property type="protein sequence ID" value="ENSMUSP00000104086.2"/>
    <property type="gene ID" value="ENSMUSG00000001323.18"/>
</dbReference>
<dbReference type="Ensembl" id="ENSMUST00000108448.8">
    <molecule id="Q9QZX7-1"/>
    <property type="protein sequence ID" value="ENSMUSP00000104087.2"/>
    <property type="gene ID" value="ENSMUSG00000001323.18"/>
</dbReference>
<dbReference type="Ensembl" id="ENSMUST00000121738.8">
    <molecule id="Q9QZX7-1"/>
    <property type="protein sequence ID" value="ENSMUSP00000113372.2"/>
    <property type="gene ID" value="ENSMUSG00000001323.18"/>
</dbReference>
<dbReference type="Ensembl" id="ENSMUST00000128556.8">
    <molecule id="Q9QZX7-3"/>
    <property type="protein sequence ID" value="ENSMUSP00000120012.2"/>
    <property type="gene ID" value="ENSMUSG00000001323.18"/>
</dbReference>
<dbReference type="GeneID" id="27364"/>
<dbReference type="KEGG" id="mmu:27364"/>
<dbReference type="UCSC" id="uc007kcr.2">
    <molecule id="Q9QZX7-1"/>
    <property type="organism name" value="mouse"/>
</dbReference>
<dbReference type="UCSC" id="uc011xzd.1">
    <molecule id="Q9QZX7-2"/>
    <property type="organism name" value="mouse"/>
</dbReference>
<dbReference type="AGR" id="MGI:1351636"/>
<dbReference type="CTD" id="63826"/>
<dbReference type="MGI" id="MGI:1351636">
    <property type="gene designation" value="Srr"/>
</dbReference>
<dbReference type="VEuPathDB" id="HostDB:ENSMUSG00000001323"/>
<dbReference type="eggNOG" id="KOG1251">
    <property type="taxonomic scope" value="Eukaryota"/>
</dbReference>
<dbReference type="GeneTree" id="ENSGT00550000075026"/>
<dbReference type="HOGENOM" id="CLU_021152_4_2_1"/>
<dbReference type="InParanoid" id="Q9QZX7"/>
<dbReference type="OMA" id="LIHPFDH"/>
<dbReference type="OrthoDB" id="4418812at2759"/>
<dbReference type="PhylomeDB" id="Q9QZX7"/>
<dbReference type="TreeFam" id="TF313346"/>
<dbReference type="BRENDA" id="4.3.1.17">
    <property type="organism ID" value="3474"/>
</dbReference>
<dbReference type="BRENDA" id="5.1.1.18">
    <property type="organism ID" value="3474"/>
</dbReference>
<dbReference type="Reactome" id="R-MMU-977347">
    <property type="pathway name" value="Serine biosynthesis"/>
</dbReference>
<dbReference type="BioGRID-ORCS" id="27364">
    <property type="hits" value="3 hits in 77 CRISPR screens"/>
</dbReference>
<dbReference type="PRO" id="PR:Q9QZX7"/>
<dbReference type="Proteomes" id="UP000000589">
    <property type="component" value="Chromosome 11"/>
</dbReference>
<dbReference type="RNAct" id="Q9QZX7">
    <property type="molecule type" value="protein"/>
</dbReference>
<dbReference type="Bgee" id="ENSMUSG00000001323">
    <property type="expression patterns" value="Expressed in CA1 field of hippocampus and 239 other cell types or tissues"/>
</dbReference>
<dbReference type="ExpressionAtlas" id="Q9QZX7">
    <property type="expression patterns" value="baseline and differential"/>
</dbReference>
<dbReference type="GO" id="GO:0045177">
    <property type="term" value="C:apical part of cell"/>
    <property type="evidence" value="ECO:0007669"/>
    <property type="project" value="Ensembl"/>
</dbReference>
<dbReference type="GO" id="GO:0005737">
    <property type="term" value="C:cytoplasm"/>
    <property type="evidence" value="ECO:0007669"/>
    <property type="project" value="Ensembl"/>
</dbReference>
<dbReference type="GO" id="GO:0043025">
    <property type="term" value="C:neuronal cell body"/>
    <property type="evidence" value="ECO:0007669"/>
    <property type="project" value="Ensembl"/>
</dbReference>
<dbReference type="GO" id="GO:0005524">
    <property type="term" value="F:ATP binding"/>
    <property type="evidence" value="ECO:0000314"/>
    <property type="project" value="MGI"/>
</dbReference>
<dbReference type="GO" id="GO:0005509">
    <property type="term" value="F:calcium ion binding"/>
    <property type="evidence" value="ECO:0000314"/>
    <property type="project" value="MGI"/>
</dbReference>
<dbReference type="GO" id="GO:0008721">
    <property type="term" value="F:D-serine ammonia-lyase activity"/>
    <property type="evidence" value="ECO:0007669"/>
    <property type="project" value="UniProtKB-EC"/>
</dbReference>
<dbReference type="GO" id="GO:0016594">
    <property type="term" value="F:glycine binding"/>
    <property type="evidence" value="ECO:0000314"/>
    <property type="project" value="MGI"/>
</dbReference>
<dbReference type="GO" id="GO:0042802">
    <property type="term" value="F:identical protein binding"/>
    <property type="evidence" value="ECO:0000353"/>
    <property type="project" value="MGI"/>
</dbReference>
<dbReference type="GO" id="GO:0003941">
    <property type="term" value="F:L-serine ammonia-lyase activity"/>
    <property type="evidence" value="ECO:0007669"/>
    <property type="project" value="UniProtKB-EC"/>
</dbReference>
<dbReference type="GO" id="GO:0000287">
    <property type="term" value="F:magnesium ion binding"/>
    <property type="evidence" value="ECO:0007669"/>
    <property type="project" value="Ensembl"/>
</dbReference>
<dbReference type="GO" id="GO:0030165">
    <property type="term" value="F:PDZ domain binding"/>
    <property type="evidence" value="ECO:0007669"/>
    <property type="project" value="Ensembl"/>
</dbReference>
<dbReference type="GO" id="GO:0042803">
    <property type="term" value="F:protein homodimerization activity"/>
    <property type="evidence" value="ECO:0007669"/>
    <property type="project" value="Ensembl"/>
</dbReference>
<dbReference type="GO" id="GO:0030170">
    <property type="term" value="F:pyridoxal phosphate binding"/>
    <property type="evidence" value="ECO:0000315"/>
    <property type="project" value="MGI"/>
</dbReference>
<dbReference type="GO" id="GO:0030378">
    <property type="term" value="F:serine racemase activity"/>
    <property type="evidence" value="ECO:0000314"/>
    <property type="project" value="MGI"/>
</dbReference>
<dbReference type="GO" id="GO:0018114">
    <property type="term" value="F:threonine racemase activity"/>
    <property type="evidence" value="ECO:0000314"/>
    <property type="project" value="MGI"/>
</dbReference>
<dbReference type="GO" id="GO:0070179">
    <property type="term" value="P:D-serine biosynthetic process"/>
    <property type="evidence" value="ECO:0000314"/>
    <property type="project" value="MGI"/>
</dbReference>
<dbReference type="GO" id="GO:0006563">
    <property type="term" value="P:L-serine metabolic process"/>
    <property type="evidence" value="ECO:0000314"/>
    <property type="project" value="MGI"/>
</dbReference>
<dbReference type="GO" id="GO:0042866">
    <property type="term" value="P:pyruvate biosynthetic process"/>
    <property type="evidence" value="ECO:0007669"/>
    <property type="project" value="Ensembl"/>
</dbReference>
<dbReference type="GO" id="GO:0032496">
    <property type="term" value="P:response to lipopolysaccharide"/>
    <property type="evidence" value="ECO:0007669"/>
    <property type="project" value="Ensembl"/>
</dbReference>
<dbReference type="GO" id="GO:0009410">
    <property type="term" value="P:response to xenobiotic stimulus"/>
    <property type="evidence" value="ECO:0007669"/>
    <property type="project" value="Ensembl"/>
</dbReference>
<dbReference type="CDD" id="cd01562">
    <property type="entry name" value="Thr-dehyd"/>
    <property type="match status" value="1"/>
</dbReference>
<dbReference type="FunFam" id="3.40.50.1100:FF:000041">
    <property type="entry name" value="Threonine ammonia-lyase, variant"/>
    <property type="match status" value="1"/>
</dbReference>
<dbReference type="Gene3D" id="3.40.50.1100">
    <property type="match status" value="2"/>
</dbReference>
<dbReference type="InterPro" id="IPR000634">
    <property type="entry name" value="Ser/Thr_deHydtase_PyrdxlP-BS"/>
</dbReference>
<dbReference type="InterPro" id="IPR001926">
    <property type="entry name" value="TrpB-like_PALP"/>
</dbReference>
<dbReference type="InterPro" id="IPR036052">
    <property type="entry name" value="TrpB-like_PALP_sf"/>
</dbReference>
<dbReference type="PANTHER" id="PTHR43050">
    <property type="entry name" value="SERINE / THREONINE RACEMASE FAMILY MEMBER"/>
    <property type="match status" value="1"/>
</dbReference>
<dbReference type="PANTHER" id="PTHR43050:SF1">
    <property type="entry name" value="SERINE RACEMASE"/>
    <property type="match status" value="1"/>
</dbReference>
<dbReference type="Pfam" id="PF00291">
    <property type="entry name" value="PALP"/>
    <property type="match status" value="1"/>
</dbReference>
<dbReference type="SUPFAM" id="SSF53686">
    <property type="entry name" value="Tryptophan synthase beta subunit-like PLP-dependent enzymes"/>
    <property type="match status" value="1"/>
</dbReference>
<dbReference type="PROSITE" id="PS00165">
    <property type="entry name" value="DEHYDRATASE_SER_THR"/>
    <property type="match status" value="1"/>
</dbReference>
<keyword id="KW-0021">Allosteric enzyme</keyword>
<keyword id="KW-0025">Alternative splicing</keyword>
<keyword id="KW-0067">ATP-binding</keyword>
<keyword id="KW-0106">Calcium</keyword>
<keyword id="KW-0903">Direct protein sequencing</keyword>
<keyword id="KW-0413">Isomerase</keyword>
<keyword id="KW-0456">Lyase</keyword>
<keyword id="KW-0460">Magnesium</keyword>
<keyword id="KW-0464">Manganese</keyword>
<keyword id="KW-0479">Metal-binding</keyword>
<keyword id="KW-0547">Nucleotide-binding</keyword>
<keyword id="KW-0597">Phosphoprotein</keyword>
<keyword id="KW-0663">Pyridoxal phosphate</keyword>
<keyword id="KW-1185">Reference proteome</keyword>
<keyword id="KW-0702">S-nitrosylation</keyword>
<evidence type="ECO:0000250" key="1">
    <source>
        <dbReference type="UniProtKB" id="O59791"/>
    </source>
</evidence>
<evidence type="ECO:0000250" key="2">
    <source>
        <dbReference type="UniProtKB" id="Q76EQ0"/>
    </source>
</evidence>
<evidence type="ECO:0000250" key="3">
    <source>
        <dbReference type="UniProtKB" id="Q9GZT4"/>
    </source>
</evidence>
<evidence type="ECO:0000269" key="4">
    <source>
    </source>
</evidence>
<evidence type="ECO:0000269" key="5">
    <source>
    </source>
</evidence>
<evidence type="ECO:0000269" key="6">
    <source>
    </source>
</evidence>
<evidence type="ECO:0000269" key="7">
    <source>
    </source>
</evidence>
<evidence type="ECO:0000269" key="8">
    <source>
    </source>
</evidence>
<evidence type="ECO:0000269" key="9">
    <source>
    </source>
</evidence>
<evidence type="ECO:0000269" key="10">
    <source ref="6"/>
</evidence>
<evidence type="ECO:0000303" key="11">
    <source>
    </source>
</evidence>
<evidence type="ECO:0000303" key="12">
    <source>
    </source>
</evidence>
<evidence type="ECO:0000305" key="13"/>
<evidence type="ECO:0007744" key="14">
    <source>
    </source>
</evidence>
<proteinExistence type="evidence at protein level"/>
<reference key="1">
    <citation type="journal article" date="1999" name="Proc. Natl. Acad. Sci. U.S.A.">
        <title>Serine racemase: a glial enzyme synthesizing D-serine to regulate glutamate-N-methyl-D-aspartate neurotransmission.</title>
        <authorList>
            <person name="Wolosker H."/>
            <person name="Blackshaw S."/>
            <person name="Snyder S.H."/>
        </authorList>
    </citation>
    <scope>NUCLEOTIDE SEQUENCE [MRNA] (ISOFORM 1)</scope>
    <scope>FUNCTION</scope>
    <scope>CATALYTIC ACTIVITY</scope>
    <scope>COFACTOR</scope>
    <source>
        <strain>BALB/cJ</strain>
    </source>
</reference>
<reference key="2">
    <citation type="journal article" date="2005" name="Science">
        <title>The transcriptional landscape of the mammalian genome.</title>
        <authorList>
            <person name="Carninci P."/>
            <person name="Kasukawa T."/>
            <person name="Katayama S."/>
            <person name="Gough J."/>
            <person name="Frith M.C."/>
            <person name="Maeda N."/>
            <person name="Oyama R."/>
            <person name="Ravasi T."/>
            <person name="Lenhard B."/>
            <person name="Wells C."/>
            <person name="Kodzius R."/>
            <person name="Shimokawa K."/>
            <person name="Bajic V.B."/>
            <person name="Brenner S.E."/>
            <person name="Batalov S."/>
            <person name="Forrest A.R."/>
            <person name="Zavolan M."/>
            <person name="Davis M.J."/>
            <person name="Wilming L.G."/>
            <person name="Aidinis V."/>
            <person name="Allen J.E."/>
            <person name="Ambesi-Impiombato A."/>
            <person name="Apweiler R."/>
            <person name="Aturaliya R.N."/>
            <person name="Bailey T.L."/>
            <person name="Bansal M."/>
            <person name="Baxter L."/>
            <person name="Beisel K.W."/>
            <person name="Bersano T."/>
            <person name="Bono H."/>
            <person name="Chalk A.M."/>
            <person name="Chiu K.P."/>
            <person name="Choudhary V."/>
            <person name="Christoffels A."/>
            <person name="Clutterbuck D.R."/>
            <person name="Crowe M.L."/>
            <person name="Dalla E."/>
            <person name="Dalrymple B.P."/>
            <person name="de Bono B."/>
            <person name="Della Gatta G."/>
            <person name="di Bernardo D."/>
            <person name="Down T."/>
            <person name="Engstrom P."/>
            <person name="Fagiolini M."/>
            <person name="Faulkner G."/>
            <person name="Fletcher C.F."/>
            <person name="Fukushima T."/>
            <person name="Furuno M."/>
            <person name="Futaki S."/>
            <person name="Gariboldi M."/>
            <person name="Georgii-Hemming P."/>
            <person name="Gingeras T.R."/>
            <person name="Gojobori T."/>
            <person name="Green R.E."/>
            <person name="Gustincich S."/>
            <person name="Harbers M."/>
            <person name="Hayashi Y."/>
            <person name="Hensch T.K."/>
            <person name="Hirokawa N."/>
            <person name="Hill D."/>
            <person name="Huminiecki L."/>
            <person name="Iacono M."/>
            <person name="Ikeo K."/>
            <person name="Iwama A."/>
            <person name="Ishikawa T."/>
            <person name="Jakt M."/>
            <person name="Kanapin A."/>
            <person name="Katoh M."/>
            <person name="Kawasawa Y."/>
            <person name="Kelso J."/>
            <person name="Kitamura H."/>
            <person name="Kitano H."/>
            <person name="Kollias G."/>
            <person name="Krishnan S.P."/>
            <person name="Kruger A."/>
            <person name="Kummerfeld S.K."/>
            <person name="Kurochkin I.V."/>
            <person name="Lareau L.F."/>
            <person name="Lazarevic D."/>
            <person name="Lipovich L."/>
            <person name="Liu J."/>
            <person name="Liuni S."/>
            <person name="McWilliam S."/>
            <person name="Madan Babu M."/>
            <person name="Madera M."/>
            <person name="Marchionni L."/>
            <person name="Matsuda H."/>
            <person name="Matsuzawa S."/>
            <person name="Miki H."/>
            <person name="Mignone F."/>
            <person name="Miyake S."/>
            <person name="Morris K."/>
            <person name="Mottagui-Tabar S."/>
            <person name="Mulder N."/>
            <person name="Nakano N."/>
            <person name="Nakauchi H."/>
            <person name="Ng P."/>
            <person name="Nilsson R."/>
            <person name="Nishiguchi S."/>
            <person name="Nishikawa S."/>
            <person name="Nori F."/>
            <person name="Ohara O."/>
            <person name="Okazaki Y."/>
            <person name="Orlando V."/>
            <person name="Pang K.C."/>
            <person name="Pavan W.J."/>
            <person name="Pavesi G."/>
            <person name="Pesole G."/>
            <person name="Petrovsky N."/>
            <person name="Piazza S."/>
            <person name="Reed J."/>
            <person name="Reid J.F."/>
            <person name="Ring B.Z."/>
            <person name="Ringwald M."/>
            <person name="Rost B."/>
            <person name="Ruan Y."/>
            <person name="Salzberg S.L."/>
            <person name="Sandelin A."/>
            <person name="Schneider C."/>
            <person name="Schoenbach C."/>
            <person name="Sekiguchi K."/>
            <person name="Semple C.A."/>
            <person name="Seno S."/>
            <person name="Sessa L."/>
            <person name="Sheng Y."/>
            <person name="Shibata Y."/>
            <person name="Shimada H."/>
            <person name="Shimada K."/>
            <person name="Silva D."/>
            <person name="Sinclair B."/>
            <person name="Sperling S."/>
            <person name="Stupka E."/>
            <person name="Sugiura K."/>
            <person name="Sultana R."/>
            <person name="Takenaka Y."/>
            <person name="Taki K."/>
            <person name="Tammoja K."/>
            <person name="Tan S.L."/>
            <person name="Tang S."/>
            <person name="Taylor M.S."/>
            <person name="Tegner J."/>
            <person name="Teichmann S.A."/>
            <person name="Ueda H.R."/>
            <person name="van Nimwegen E."/>
            <person name="Verardo R."/>
            <person name="Wei C.L."/>
            <person name="Yagi K."/>
            <person name="Yamanishi H."/>
            <person name="Zabarovsky E."/>
            <person name="Zhu S."/>
            <person name="Zimmer A."/>
            <person name="Hide W."/>
            <person name="Bult C."/>
            <person name="Grimmond S.M."/>
            <person name="Teasdale R.D."/>
            <person name="Liu E.T."/>
            <person name="Brusic V."/>
            <person name="Quackenbush J."/>
            <person name="Wahlestedt C."/>
            <person name="Mattick J.S."/>
            <person name="Hume D.A."/>
            <person name="Kai C."/>
            <person name="Sasaki D."/>
            <person name="Tomaru Y."/>
            <person name="Fukuda S."/>
            <person name="Kanamori-Katayama M."/>
            <person name="Suzuki M."/>
            <person name="Aoki J."/>
            <person name="Arakawa T."/>
            <person name="Iida J."/>
            <person name="Imamura K."/>
            <person name="Itoh M."/>
            <person name="Kato T."/>
            <person name="Kawaji H."/>
            <person name="Kawagashira N."/>
            <person name="Kawashima T."/>
            <person name="Kojima M."/>
            <person name="Kondo S."/>
            <person name="Konno H."/>
            <person name="Nakano K."/>
            <person name="Ninomiya N."/>
            <person name="Nishio T."/>
            <person name="Okada M."/>
            <person name="Plessy C."/>
            <person name="Shibata K."/>
            <person name="Shiraki T."/>
            <person name="Suzuki S."/>
            <person name="Tagami M."/>
            <person name="Waki K."/>
            <person name="Watahiki A."/>
            <person name="Okamura-Oho Y."/>
            <person name="Suzuki H."/>
            <person name="Kawai J."/>
            <person name="Hayashizaki Y."/>
        </authorList>
    </citation>
    <scope>NUCLEOTIDE SEQUENCE [LARGE SCALE MRNA] (ISOFORMS 1 AND 2)</scope>
    <source>
        <strain>C57BL/6J</strain>
        <strain>NOD</strain>
        <tissue>Brain cortex</tissue>
        <tissue>Spleen</tissue>
        <tissue>Testis</tissue>
    </source>
</reference>
<reference key="3">
    <citation type="journal article" date="2009" name="PLoS Biol.">
        <title>Lineage-specific biology revealed by a finished genome assembly of the mouse.</title>
        <authorList>
            <person name="Church D.M."/>
            <person name="Goodstadt L."/>
            <person name="Hillier L.W."/>
            <person name="Zody M.C."/>
            <person name="Goldstein S."/>
            <person name="She X."/>
            <person name="Bult C.J."/>
            <person name="Agarwala R."/>
            <person name="Cherry J.L."/>
            <person name="DiCuccio M."/>
            <person name="Hlavina W."/>
            <person name="Kapustin Y."/>
            <person name="Meric P."/>
            <person name="Maglott D."/>
            <person name="Birtle Z."/>
            <person name="Marques A.C."/>
            <person name="Graves T."/>
            <person name="Zhou S."/>
            <person name="Teague B."/>
            <person name="Potamousis K."/>
            <person name="Churas C."/>
            <person name="Place M."/>
            <person name="Herschleb J."/>
            <person name="Runnheim R."/>
            <person name="Forrest D."/>
            <person name="Amos-Landgraf J."/>
            <person name="Schwartz D.C."/>
            <person name="Cheng Z."/>
            <person name="Lindblad-Toh K."/>
            <person name="Eichler E.E."/>
            <person name="Ponting C.P."/>
        </authorList>
    </citation>
    <scope>NUCLEOTIDE SEQUENCE [LARGE SCALE GENOMIC DNA]</scope>
    <source>
        <strain>C57BL/6J</strain>
    </source>
</reference>
<reference key="4">
    <citation type="journal article" date="2004" name="Genome Res.">
        <title>The status, quality, and expansion of the NIH full-length cDNA project: the Mammalian Gene Collection (MGC).</title>
        <authorList>
            <consortium name="The MGC Project Team"/>
        </authorList>
    </citation>
    <scope>NUCLEOTIDE SEQUENCE [LARGE SCALE MRNA] (ISOFORM 1)</scope>
    <source>
        <tissue>Liver</tissue>
    </source>
</reference>
<reference key="5">
    <citation type="submission" date="2005-09" db="EMBL/GenBank/DDBJ databases">
        <title>Multiple splice variants in 5'UTR of mouse serine racemase.</title>
        <authorList>
            <person name="Ohba H."/>
            <person name="Ohnishi T."/>
            <person name="Yoshikawa T."/>
        </authorList>
    </citation>
    <scope>NUCLEOTIDE SEQUENCE [MRNA] OF 1-56 (ISOFORMS 1/2/3)</scope>
    <source>
        <tissue>Brain</tissue>
    </source>
</reference>
<reference key="6">
    <citation type="submission" date="2007-03" db="UniProtKB">
        <authorList>
            <person name="Lubec G."/>
            <person name="Klug S."/>
        </authorList>
    </citation>
    <scope>PROTEIN SEQUENCE OF 15-40</scope>
    <scope>IDENTIFICATION BY MASS SPECTROMETRY</scope>
    <scope>TISSUE SPECIFICITY</scope>
    <source>
        <tissue>Hippocampus</tissue>
    </source>
</reference>
<reference key="7">
    <citation type="journal article" date="2002" name="Neurochem. Res.">
        <title>Allosteric regulation of mouse brain serine racemase.</title>
        <authorList>
            <person name="Neidle A."/>
            <person name="Dunlop D.S."/>
        </authorList>
    </citation>
    <scope>FUNCTION</scope>
    <scope>CATALYTIC ACTIVITY</scope>
    <scope>COFACTOR</scope>
    <scope>SUBUNIT</scope>
    <scope>ACTIVITY REGULATION</scope>
</reference>
<reference key="8">
    <citation type="journal article" date="2002" name="Proc. Natl. Acad. Sci. U.S.A.">
        <title>Cofactors of serine racemase that physiologically stimulate the synthesis of the N-methyl-D-aspartate (NMDA) receptor coagonist D-serine.</title>
        <authorList>
            <person name="De Miranda J."/>
            <person name="Panizzutti R."/>
            <person name="Foltyn V.N."/>
            <person name="Wolosker H."/>
        </authorList>
    </citation>
    <scope>FUNCTION</scope>
    <scope>CATALYTIC ACTIVITY</scope>
    <scope>ACTIVITY REGULATION</scope>
</reference>
<reference key="9">
    <citation type="journal article" date="2005" name="J. Biol. Chem.">
        <title>Serine racemase modulates intracellular D-serine levels through an alpha,beta-elimination activity.</title>
        <authorList>
            <person name="Foltyn V.N."/>
            <person name="Bendikov I."/>
            <person name="De Miranda J."/>
            <person name="Panizzutti R."/>
            <person name="Dumin E."/>
            <person name="Shleper M."/>
            <person name="Li P."/>
            <person name="Toney M.D."/>
            <person name="Kartvelishvily E."/>
            <person name="Wolosker H."/>
        </authorList>
    </citation>
    <scope>FUNCTION</scope>
    <scope>CATALYTIC ACTIVITY</scope>
</reference>
<reference key="10">
    <citation type="journal article" date="2007" name="Proc. Natl. Acad. Sci. U.S.A.">
        <title>Nitric oxide S-nitrosylates serine racemase, mediating feedback inhibition of D-serine formation.</title>
        <authorList>
            <person name="Mustafa A.K."/>
            <person name="Kumar M."/>
            <person name="Selvakumar B."/>
            <person name="Ho G.P."/>
            <person name="Ehmsen J.T."/>
            <person name="Barrow R.K."/>
            <person name="Amzel L.M."/>
            <person name="Snyder S.H."/>
        </authorList>
    </citation>
    <scope>FUNCTION</scope>
    <scope>S-NITROSYLATION AT CYS-113</scope>
    <scope>ATP-BINDING</scope>
    <scope>MUTAGENESIS OF CYS-113</scope>
</reference>
<reference key="11">
    <citation type="journal article" date="2010" name="Cell">
        <title>A tissue-specific atlas of mouse protein phosphorylation and expression.</title>
        <authorList>
            <person name="Huttlin E.L."/>
            <person name="Jedrychowski M.P."/>
            <person name="Elias J.E."/>
            <person name="Goswami T."/>
            <person name="Rad R."/>
            <person name="Beausoleil S.A."/>
            <person name="Villen J."/>
            <person name="Haas W."/>
            <person name="Sowa M.E."/>
            <person name="Gygi S.P."/>
        </authorList>
    </citation>
    <scope>PHOSPHORYLATION [LARGE SCALE ANALYSIS] AT THR-71</scope>
    <scope>IDENTIFICATION BY MASS SPECTROMETRY [LARGE SCALE ANALYSIS]</scope>
    <source>
        <tissue>Brain</tissue>
        <tissue>Kidney</tissue>
        <tissue>Liver</tissue>
        <tissue>Lung</tissue>
        <tissue>Spleen</tissue>
    </source>
</reference>
<reference key="12">
    <citation type="journal article" date="2022" name="Transl. Psychiatry">
        <title>D-aspartate oxidase gene duplication induces social recognition memory deficit in mice and intellectual disabilities in humans.</title>
        <authorList>
            <person name="Lombardo B."/>
            <person name="Pagani M."/>
            <person name="De Rosa A."/>
            <person name="Nunziato M."/>
            <person name="Migliarini S."/>
            <person name="Garofalo M."/>
            <person name="Terrile M."/>
            <person name="D'Argenio V."/>
            <person name="Galbusera A."/>
            <person name="Nuzzo T."/>
            <person name="Ranieri A."/>
            <person name="Vitale A."/>
            <person name="Leggiero E."/>
            <person name="Di Maio A."/>
            <person name="Barsotti N."/>
            <person name="Borello U."/>
            <person name="Napolitano F."/>
            <person name="Mandarino A."/>
            <person name="Carotenuto M."/>
            <person name="Heresco-Levy U."/>
            <person name="Pasqualetti M."/>
            <person name="Malatesta P."/>
            <person name="Gozzi A."/>
            <person name="Errico F."/>
            <person name="Salvatore F."/>
            <person name="Pastore L."/>
            <person name="Usiello A."/>
        </authorList>
    </citation>
    <scope>TISSUE SPECIFICITY</scope>
</reference>